<proteinExistence type="evidence at protein level"/>
<keyword id="KW-0597">Phosphoprotein</keyword>
<keyword id="KW-1267">Proteomics identification</keyword>
<keyword id="KW-1185">Reference proteome</keyword>
<sequence length="121" mass="13865">MGCASAKHVATVQNEEEAQKGKNYQNGDVFGDEYRIKPVEEVKYMKNGAEEEQKIAARNQENLEKSASSNVRLKTNKEVPGLVHQPRANMHISESQQEFFRMLDEKIEKGRDYCSEEEDIT</sequence>
<organism>
    <name type="scientific">Homo sapiens</name>
    <name type="common">Human</name>
    <dbReference type="NCBI Taxonomy" id="9606"/>
    <lineage>
        <taxon>Eukaryota</taxon>
        <taxon>Metazoa</taxon>
        <taxon>Chordata</taxon>
        <taxon>Craniata</taxon>
        <taxon>Vertebrata</taxon>
        <taxon>Euteleostomi</taxon>
        <taxon>Mammalia</taxon>
        <taxon>Eutheria</taxon>
        <taxon>Euarchontoglires</taxon>
        <taxon>Primates</taxon>
        <taxon>Haplorrhini</taxon>
        <taxon>Catarrhini</taxon>
        <taxon>Hominidae</taxon>
        <taxon>Homo</taxon>
    </lineage>
</organism>
<accession>Q9H246</accession>
<accession>B2R551</accession>
<name>CA021_HUMAN</name>
<protein>
    <recommendedName>
        <fullName>Uncharacterized protein C1orf21</fullName>
    </recommendedName>
    <alternativeName>
        <fullName>Cell proliferation-inducing gene 13 protein</fullName>
    </alternativeName>
</protein>
<comment type="interaction">
    <interactant intactId="EBI-10305393">
        <id>Q9H246</id>
    </interactant>
    <interactant intactId="EBI-10305400">
        <id>Q8N682</id>
        <label>DRAM1</label>
    </interactant>
    <organismsDiffer>false</organismsDiffer>
    <experiments>3</experiments>
</comment>
<comment type="interaction">
    <interactant intactId="EBI-10305393">
        <id>Q9H246</id>
    </interactant>
    <interactant intactId="EBI-641666">
        <id>Q15172</id>
        <label>PPP2R5A</label>
    </interactant>
    <organismsDiffer>false</organismsDiffer>
    <experiments>7</experiments>
</comment>
<comment type="tissue specificity">
    <text evidence="2">Expressed in spleen, prostate, testis and uterus.</text>
</comment>
<gene>
    <name type="primary">C1orf21</name>
    <name type="ORF">PIG13</name>
</gene>
<feature type="chain" id="PRO_0000089246" description="Uncharacterized protein C1orf21">
    <location>
        <begin position="1"/>
        <end position="121"/>
    </location>
</feature>
<feature type="region of interest" description="Disordered" evidence="1">
    <location>
        <begin position="1"/>
        <end position="28"/>
    </location>
</feature>
<feature type="region of interest" description="Disordered" evidence="1">
    <location>
        <begin position="60"/>
        <end position="82"/>
    </location>
</feature>
<feature type="modified residue" description="Phosphoserine" evidence="3 4 5">
    <location>
        <position position="95"/>
    </location>
</feature>
<feature type="modified residue" description="Phosphoserine" evidence="3 4">
    <location>
        <position position="115"/>
    </location>
</feature>
<reference key="1">
    <citation type="journal article" date="2001" name="Genomics">
        <title>Cloning and characterization of 13 novel transcripts and the human RGS8 gene from the 1q25 region encompassing the hereditary prostate cancer (HPC1) locus.</title>
        <authorList>
            <person name="Sood R."/>
            <person name="Bonner T.I."/>
            <person name="Malakowska I."/>
            <person name="Stephan D.A."/>
            <person name="Robbins C.M."/>
            <person name="Connors T.D."/>
            <person name="Morgenbesser S.D."/>
            <person name="Su K."/>
            <person name="Faruque M.U."/>
            <person name="Pinkett H."/>
            <person name="Graham C."/>
            <person name="Baxevanis A.D."/>
            <person name="Klinger K.W."/>
            <person name="Landes G.M."/>
            <person name="Trent J.M."/>
            <person name="Carpten J.D."/>
        </authorList>
    </citation>
    <scope>NUCLEOTIDE SEQUENCE [MRNA]</scope>
    <scope>TISSUE SPECIFICITY</scope>
</reference>
<reference key="2">
    <citation type="submission" date="2003-03" db="EMBL/GenBank/DDBJ databases">
        <title>Identification of a human cell proliferation gene 13.</title>
        <authorList>
            <person name="Kim J.W."/>
        </authorList>
    </citation>
    <scope>NUCLEOTIDE SEQUENCE [LARGE SCALE MRNA]</scope>
</reference>
<reference key="3">
    <citation type="journal article" date="2004" name="Nat. Genet.">
        <title>Complete sequencing and characterization of 21,243 full-length human cDNAs.</title>
        <authorList>
            <person name="Ota T."/>
            <person name="Suzuki Y."/>
            <person name="Nishikawa T."/>
            <person name="Otsuki T."/>
            <person name="Sugiyama T."/>
            <person name="Irie R."/>
            <person name="Wakamatsu A."/>
            <person name="Hayashi K."/>
            <person name="Sato H."/>
            <person name="Nagai K."/>
            <person name="Kimura K."/>
            <person name="Makita H."/>
            <person name="Sekine M."/>
            <person name="Obayashi M."/>
            <person name="Nishi T."/>
            <person name="Shibahara T."/>
            <person name="Tanaka T."/>
            <person name="Ishii S."/>
            <person name="Yamamoto J."/>
            <person name="Saito K."/>
            <person name="Kawai Y."/>
            <person name="Isono Y."/>
            <person name="Nakamura Y."/>
            <person name="Nagahari K."/>
            <person name="Murakami K."/>
            <person name="Yasuda T."/>
            <person name="Iwayanagi T."/>
            <person name="Wagatsuma M."/>
            <person name="Shiratori A."/>
            <person name="Sudo H."/>
            <person name="Hosoiri T."/>
            <person name="Kaku Y."/>
            <person name="Kodaira H."/>
            <person name="Kondo H."/>
            <person name="Sugawara M."/>
            <person name="Takahashi M."/>
            <person name="Kanda K."/>
            <person name="Yokoi T."/>
            <person name="Furuya T."/>
            <person name="Kikkawa E."/>
            <person name="Omura Y."/>
            <person name="Abe K."/>
            <person name="Kamihara K."/>
            <person name="Katsuta N."/>
            <person name="Sato K."/>
            <person name="Tanikawa M."/>
            <person name="Yamazaki M."/>
            <person name="Ninomiya K."/>
            <person name="Ishibashi T."/>
            <person name="Yamashita H."/>
            <person name="Murakawa K."/>
            <person name="Fujimori K."/>
            <person name="Tanai H."/>
            <person name="Kimata M."/>
            <person name="Watanabe M."/>
            <person name="Hiraoka S."/>
            <person name="Chiba Y."/>
            <person name="Ishida S."/>
            <person name="Ono Y."/>
            <person name="Takiguchi S."/>
            <person name="Watanabe S."/>
            <person name="Yosida M."/>
            <person name="Hotuta T."/>
            <person name="Kusano J."/>
            <person name="Kanehori K."/>
            <person name="Takahashi-Fujii A."/>
            <person name="Hara H."/>
            <person name="Tanase T.-O."/>
            <person name="Nomura Y."/>
            <person name="Togiya S."/>
            <person name="Komai F."/>
            <person name="Hara R."/>
            <person name="Takeuchi K."/>
            <person name="Arita M."/>
            <person name="Imose N."/>
            <person name="Musashino K."/>
            <person name="Yuuki H."/>
            <person name="Oshima A."/>
            <person name="Sasaki N."/>
            <person name="Aotsuka S."/>
            <person name="Yoshikawa Y."/>
            <person name="Matsunawa H."/>
            <person name="Ichihara T."/>
            <person name="Shiohata N."/>
            <person name="Sano S."/>
            <person name="Moriya S."/>
            <person name="Momiyama H."/>
            <person name="Satoh N."/>
            <person name="Takami S."/>
            <person name="Terashima Y."/>
            <person name="Suzuki O."/>
            <person name="Nakagawa S."/>
            <person name="Senoh A."/>
            <person name="Mizoguchi H."/>
            <person name="Goto Y."/>
            <person name="Shimizu F."/>
            <person name="Wakebe H."/>
            <person name="Hishigaki H."/>
            <person name="Watanabe T."/>
            <person name="Sugiyama A."/>
            <person name="Takemoto M."/>
            <person name="Kawakami B."/>
            <person name="Yamazaki M."/>
            <person name="Watanabe K."/>
            <person name="Kumagai A."/>
            <person name="Itakura S."/>
            <person name="Fukuzumi Y."/>
            <person name="Fujimori Y."/>
            <person name="Komiyama M."/>
            <person name="Tashiro H."/>
            <person name="Tanigami A."/>
            <person name="Fujiwara T."/>
            <person name="Ono T."/>
            <person name="Yamada K."/>
            <person name="Fujii Y."/>
            <person name="Ozaki K."/>
            <person name="Hirao M."/>
            <person name="Ohmori Y."/>
            <person name="Kawabata A."/>
            <person name="Hikiji T."/>
            <person name="Kobatake N."/>
            <person name="Inagaki H."/>
            <person name="Ikema Y."/>
            <person name="Okamoto S."/>
            <person name="Okitani R."/>
            <person name="Kawakami T."/>
            <person name="Noguchi S."/>
            <person name="Itoh T."/>
            <person name="Shigeta K."/>
            <person name="Senba T."/>
            <person name="Matsumura K."/>
            <person name="Nakajima Y."/>
            <person name="Mizuno T."/>
            <person name="Morinaga M."/>
            <person name="Sasaki M."/>
            <person name="Togashi T."/>
            <person name="Oyama M."/>
            <person name="Hata H."/>
            <person name="Watanabe M."/>
            <person name="Komatsu T."/>
            <person name="Mizushima-Sugano J."/>
            <person name="Satoh T."/>
            <person name="Shirai Y."/>
            <person name="Takahashi Y."/>
            <person name="Nakagawa K."/>
            <person name="Okumura K."/>
            <person name="Nagase T."/>
            <person name="Nomura N."/>
            <person name="Kikuchi H."/>
            <person name="Masuho Y."/>
            <person name="Yamashita R."/>
            <person name="Nakai K."/>
            <person name="Yada T."/>
            <person name="Nakamura Y."/>
            <person name="Ohara O."/>
            <person name="Isogai T."/>
            <person name="Sugano S."/>
        </authorList>
    </citation>
    <scope>NUCLEOTIDE SEQUENCE [LARGE SCALE MRNA]</scope>
    <source>
        <tissue>Trachea</tissue>
    </source>
</reference>
<reference key="4">
    <citation type="journal article" date="2006" name="Nature">
        <title>The DNA sequence and biological annotation of human chromosome 1.</title>
        <authorList>
            <person name="Gregory S.G."/>
            <person name="Barlow K.F."/>
            <person name="McLay K.E."/>
            <person name="Kaul R."/>
            <person name="Swarbreck D."/>
            <person name="Dunham A."/>
            <person name="Scott C.E."/>
            <person name="Howe K.L."/>
            <person name="Woodfine K."/>
            <person name="Spencer C.C.A."/>
            <person name="Jones M.C."/>
            <person name="Gillson C."/>
            <person name="Searle S."/>
            <person name="Zhou Y."/>
            <person name="Kokocinski F."/>
            <person name="McDonald L."/>
            <person name="Evans R."/>
            <person name="Phillips K."/>
            <person name="Atkinson A."/>
            <person name="Cooper R."/>
            <person name="Jones C."/>
            <person name="Hall R.E."/>
            <person name="Andrews T.D."/>
            <person name="Lloyd C."/>
            <person name="Ainscough R."/>
            <person name="Almeida J.P."/>
            <person name="Ambrose K.D."/>
            <person name="Anderson F."/>
            <person name="Andrew R.W."/>
            <person name="Ashwell R.I.S."/>
            <person name="Aubin K."/>
            <person name="Babbage A.K."/>
            <person name="Bagguley C.L."/>
            <person name="Bailey J."/>
            <person name="Beasley H."/>
            <person name="Bethel G."/>
            <person name="Bird C.P."/>
            <person name="Bray-Allen S."/>
            <person name="Brown J.Y."/>
            <person name="Brown A.J."/>
            <person name="Buckley D."/>
            <person name="Burton J."/>
            <person name="Bye J."/>
            <person name="Carder C."/>
            <person name="Chapman J.C."/>
            <person name="Clark S.Y."/>
            <person name="Clarke G."/>
            <person name="Clee C."/>
            <person name="Cobley V."/>
            <person name="Collier R.E."/>
            <person name="Corby N."/>
            <person name="Coville G.J."/>
            <person name="Davies J."/>
            <person name="Deadman R."/>
            <person name="Dunn M."/>
            <person name="Earthrowl M."/>
            <person name="Ellington A.G."/>
            <person name="Errington H."/>
            <person name="Frankish A."/>
            <person name="Frankland J."/>
            <person name="French L."/>
            <person name="Garner P."/>
            <person name="Garnett J."/>
            <person name="Gay L."/>
            <person name="Ghori M.R.J."/>
            <person name="Gibson R."/>
            <person name="Gilby L.M."/>
            <person name="Gillett W."/>
            <person name="Glithero R.J."/>
            <person name="Grafham D.V."/>
            <person name="Griffiths C."/>
            <person name="Griffiths-Jones S."/>
            <person name="Grocock R."/>
            <person name="Hammond S."/>
            <person name="Harrison E.S.I."/>
            <person name="Hart E."/>
            <person name="Haugen E."/>
            <person name="Heath P.D."/>
            <person name="Holmes S."/>
            <person name="Holt K."/>
            <person name="Howden P.J."/>
            <person name="Hunt A.R."/>
            <person name="Hunt S.E."/>
            <person name="Hunter G."/>
            <person name="Isherwood J."/>
            <person name="James R."/>
            <person name="Johnson C."/>
            <person name="Johnson D."/>
            <person name="Joy A."/>
            <person name="Kay M."/>
            <person name="Kershaw J.K."/>
            <person name="Kibukawa M."/>
            <person name="Kimberley A.M."/>
            <person name="King A."/>
            <person name="Knights A.J."/>
            <person name="Lad H."/>
            <person name="Laird G."/>
            <person name="Lawlor S."/>
            <person name="Leongamornlert D.A."/>
            <person name="Lloyd D.M."/>
            <person name="Loveland J."/>
            <person name="Lovell J."/>
            <person name="Lush M.J."/>
            <person name="Lyne R."/>
            <person name="Martin S."/>
            <person name="Mashreghi-Mohammadi M."/>
            <person name="Matthews L."/>
            <person name="Matthews N.S.W."/>
            <person name="McLaren S."/>
            <person name="Milne S."/>
            <person name="Mistry S."/>
            <person name="Moore M.J.F."/>
            <person name="Nickerson T."/>
            <person name="O'Dell C.N."/>
            <person name="Oliver K."/>
            <person name="Palmeiri A."/>
            <person name="Palmer S.A."/>
            <person name="Parker A."/>
            <person name="Patel D."/>
            <person name="Pearce A.V."/>
            <person name="Peck A.I."/>
            <person name="Pelan S."/>
            <person name="Phelps K."/>
            <person name="Phillimore B.J."/>
            <person name="Plumb R."/>
            <person name="Rajan J."/>
            <person name="Raymond C."/>
            <person name="Rouse G."/>
            <person name="Saenphimmachak C."/>
            <person name="Sehra H.K."/>
            <person name="Sheridan E."/>
            <person name="Shownkeen R."/>
            <person name="Sims S."/>
            <person name="Skuce C.D."/>
            <person name="Smith M."/>
            <person name="Steward C."/>
            <person name="Subramanian S."/>
            <person name="Sycamore N."/>
            <person name="Tracey A."/>
            <person name="Tromans A."/>
            <person name="Van Helmond Z."/>
            <person name="Wall M."/>
            <person name="Wallis J.M."/>
            <person name="White S."/>
            <person name="Whitehead S.L."/>
            <person name="Wilkinson J.E."/>
            <person name="Willey D.L."/>
            <person name="Williams H."/>
            <person name="Wilming L."/>
            <person name="Wray P.W."/>
            <person name="Wu Z."/>
            <person name="Coulson A."/>
            <person name="Vaudin M."/>
            <person name="Sulston J.E."/>
            <person name="Durbin R.M."/>
            <person name="Hubbard T."/>
            <person name="Wooster R."/>
            <person name="Dunham I."/>
            <person name="Carter N.P."/>
            <person name="McVean G."/>
            <person name="Ross M.T."/>
            <person name="Harrow J."/>
            <person name="Olson M.V."/>
            <person name="Beck S."/>
            <person name="Rogers J."/>
            <person name="Bentley D.R."/>
        </authorList>
    </citation>
    <scope>NUCLEOTIDE SEQUENCE [LARGE SCALE GENOMIC DNA]</scope>
</reference>
<reference key="5">
    <citation type="submission" date="2005-07" db="EMBL/GenBank/DDBJ databases">
        <authorList>
            <person name="Mural R.J."/>
            <person name="Istrail S."/>
            <person name="Sutton G.G."/>
            <person name="Florea L."/>
            <person name="Halpern A.L."/>
            <person name="Mobarry C.M."/>
            <person name="Lippert R."/>
            <person name="Walenz B."/>
            <person name="Shatkay H."/>
            <person name="Dew I."/>
            <person name="Miller J.R."/>
            <person name="Flanigan M.J."/>
            <person name="Edwards N.J."/>
            <person name="Bolanos R."/>
            <person name="Fasulo D."/>
            <person name="Halldorsson B.V."/>
            <person name="Hannenhalli S."/>
            <person name="Turner R."/>
            <person name="Yooseph S."/>
            <person name="Lu F."/>
            <person name="Nusskern D.R."/>
            <person name="Shue B.C."/>
            <person name="Zheng X.H."/>
            <person name="Zhong F."/>
            <person name="Delcher A.L."/>
            <person name="Huson D.H."/>
            <person name="Kravitz S.A."/>
            <person name="Mouchard L."/>
            <person name="Reinert K."/>
            <person name="Remington K.A."/>
            <person name="Clark A.G."/>
            <person name="Waterman M.S."/>
            <person name="Eichler E.E."/>
            <person name="Adams M.D."/>
            <person name="Hunkapiller M.W."/>
            <person name="Myers E.W."/>
            <person name="Venter J.C."/>
        </authorList>
    </citation>
    <scope>NUCLEOTIDE SEQUENCE [LARGE SCALE GENOMIC DNA]</scope>
</reference>
<reference key="6">
    <citation type="journal article" date="2004" name="Genome Res.">
        <title>The status, quality, and expansion of the NIH full-length cDNA project: the Mammalian Gene Collection (MGC).</title>
        <authorList>
            <consortium name="The MGC Project Team"/>
        </authorList>
    </citation>
    <scope>NUCLEOTIDE SEQUENCE [LARGE SCALE MRNA]</scope>
    <source>
        <tissue>Placenta</tissue>
    </source>
</reference>
<reference key="7">
    <citation type="journal article" date="2008" name="Proc. Natl. Acad. Sci. U.S.A.">
        <title>A quantitative atlas of mitotic phosphorylation.</title>
        <authorList>
            <person name="Dephoure N."/>
            <person name="Zhou C."/>
            <person name="Villen J."/>
            <person name="Beausoleil S.A."/>
            <person name="Bakalarski C.E."/>
            <person name="Elledge S.J."/>
            <person name="Gygi S.P."/>
        </authorList>
    </citation>
    <scope>PHOSPHORYLATION [LARGE SCALE ANALYSIS] AT SER-95 AND SER-115</scope>
    <scope>IDENTIFICATION BY MASS SPECTROMETRY [LARGE SCALE ANALYSIS]</scope>
    <source>
        <tissue>Cervix carcinoma</tissue>
    </source>
</reference>
<reference key="8">
    <citation type="journal article" date="2009" name="Sci. Signal.">
        <title>Quantitative phosphoproteomic analysis of T cell receptor signaling reveals system-wide modulation of protein-protein interactions.</title>
        <authorList>
            <person name="Mayya V."/>
            <person name="Lundgren D.H."/>
            <person name="Hwang S.-I."/>
            <person name="Rezaul K."/>
            <person name="Wu L."/>
            <person name="Eng J.K."/>
            <person name="Rodionov V."/>
            <person name="Han D.K."/>
        </authorList>
    </citation>
    <scope>PHOSPHORYLATION [LARGE SCALE ANALYSIS] AT SER-95 AND SER-115</scope>
    <scope>IDENTIFICATION BY MASS SPECTROMETRY [LARGE SCALE ANALYSIS]</scope>
    <source>
        <tissue>Leukemic T-cell</tissue>
    </source>
</reference>
<reference key="9">
    <citation type="journal article" date="2014" name="J. Proteomics">
        <title>An enzyme assisted RP-RPLC approach for in-depth analysis of human liver phosphoproteome.</title>
        <authorList>
            <person name="Bian Y."/>
            <person name="Song C."/>
            <person name="Cheng K."/>
            <person name="Dong M."/>
            <person name="Wang F."/>
            <person name="Huang J."/>
            <person name="Sun D."/>
            <person name="Wang L."/>
            <person name="Ye M."/>
            <person name="Zou H."/>
        </authorList>
    </citation>
    <scope>PHOSPHORYLATION [LARGE SCALE ANALYSIS] AT SER-95</scope>
    <scope>IDENTIFICATION BY MASS SPECTROMETRY [LARGE SCALE ANALYSIS]</scope>
    <source>
        <tissue>Liver</tissue>
    </source>
</reference>
<evidence type="ECO:0000256" key="1">
    <source>
        <dbReference type="SAM" id="MobiDB-lite"/>
    </source>
</evidence>
<evidence type="ECO:0000269" key="2">
    <source>
    </source>
</evidence>
<evidence type="ECO:0007744" key="3">
    <source>
    </source>
</evidence>
<evidence type="ECO:0007744" key="4">
    <source>
    </source>
</evidence>
<evidence type="ECO:0007744" key="5">
    <source>
    </source>
</evidence>
<dbReference type="EMBL" id="AF312864">
    <property type="protein sequence ID" value="AAG45338.1"/>
    <property type="molecule type" value="mRNA"/>
</dbReference>
<dbReference type="EMBL" id="AY258286">
    <property type="protein sequence ID" value="AAP82231.1"/>
    <property type="molecule type" value="mRNA"/>
</dbReference>
<dbReference type="EMBL" id="AK056487">
    <property type="protein sequence ID" value="BAB71196.1"/>
    <property type="molecule type" value="mRNA"/>
</dbReference>
<dbReference type="EMBL" id="AK312062">
    <property type="protein sequence ID" value="BAG34998.1"/>
    <property type="molecule type" value="mRNA"/>
</dbReference>
<dbReference type="EMBL" id="AL078645">
    <property type="status" value="NOT_ANNOTATED_CDS"/>
    <property type="molecule type" value="Genomic_DNA"/>
</dbReference>
<dbReference type="EMBL" id="AL358152">
    <property type="status" value="NOT_ANNOTATED_CDS"/>
    <property type="molecule type" value="Genomic_DNA"/>
</dbReference>
<dbReference type="EMBL" id="CH471067">
    <property type="protein sequence ID" value="EAW91176.1"/>
    <property type="molecule type" value="Genomic_DNA"/>
</dbReference>
<dbReference type="EMBL" id="BC028567">
    <property type="protein sequence ID" value="AAH28567.1"/>
    <property type="molecule type" value="mRNA"/>
</dbReference>
<dbReference type="CCDS" id="CCDS1362.1"/>
<dbReference type="RefSeq" id="NP_110433.1">
    <property type="nucleotide sequence ID" value="NM_030806.4"/>
</dbReference>
<dbReference type="SMR" id="Q9H246"/>
<dbReference type="BioGRID" id="123526">
    <property type="interactions" value="38"/>
</dbReference>
<dbReference type="FunCoup" id="Q9H246">
    <property type="interactions" value="96"/>
</dbReference>
<dbReference type="IntAct" id="Q9H246">
    <property type="interactions" value="19"/>
</dbReference>
<dbReference type="STRING" id="9606.ENSP00000235307"/>
<dbReference type="iPTMnet" id="Q9H246"/>
<dbReference type="PhosphoSitePlus" id="Q9H246"/>
<dbReference type="SwissPalm" id="Q9H246"/>
<dbReference type="BioMuta" id="C1orf21"/>
<dbReference type="jPOST" id="Q9H246"/>
<dbReference type="MassIVE" id="Q9H246"/>
<dbReference type="PaxDb" id="9606-ENSP00000235307"/>
<dbReference type="PeptideAtlas" id="Q9H246"/>
<dbReference type="ProteomicsDB" id="80488"/>
<dbReference type="Pumba" id="Q9H246"/>
<dbReference type="Antibodypedia" id="20606">
    <property type="antibodies" value="50 antibodies from 13 providers"/>
</dbReference>
<dbReference type="DNASU" id="81563"/>
<dbReference type="Ensembl" id="ENST00000235307.7">
    <property type="protein sequence ID" value="ENSP00000235307.6"/>
    <property type="gene ID" value="ENSG00000116667.15"/>
</dbReference>
<dbReference type="GeneID" id="81563"/>
<dbReference type="KEGG" id="hsa:81563"/>
<dbReference type="MANE-Select" id="ENST00000235307.7">
    <property type="protein sequence ID" value="ENSP00000235307.6"/>
    <property type="RefSeq nucleotide sequence ID" value="NM_030806.4"/>
    <property type="RefSeq protein sequence ID" value="NP_110433.1"/>
</dbReference>
<dbReference type="UCSC" id="uc001gqv.2">
    <property type="organism name" value="human"/>
</dbReference>
<dbReference type="AGR" id="HGNC:15494"/>
<dbReference type="CTD" id="81563"/>
<dbReference type="DisGeNET" id="81563"/>
<dbReference type="GeneCards" id="C1orf21"/>
<dbReference type="HGNC" id="HGNC:15494">
    <property type="gene designation" value="C1orf21"/>
</dbReference>
<dbReference type="HPA" id="ENSG00000116667">
    <property type="expression patterns" value="Tissue enhanced (skeletal)"/>
</dbReference>
<dbReference type="neXtProt" id="NX_Q9H246"/>
<dbReference type="OpenTargets" id="ENSG00000116667"/>
<dbReference type="PharmGKB" id="PA25610"/>
<dbReference type="VEuPathDB" id="HostDB:ENSG00000116667"/>
<dbReference type="eggNOG" id="ENOG502RYJP">
    <property type="taxonomic scope" value="Eukaryota"/>
</dbReference>
<dbReference type="GeneTree" id="ENSGT00390000014594"/>
<dbReference type="HOGENOM" id="CLU_136866_0_0_1"/>
<dbReference type="InParanoid" id="Q9H246"/>
<dbReference type="OMA" id="KSNVQHK"/>
<dbReference type="OrthoDB" id="5919401at2759"/>
<dbReference type="PAN-GO" id="Q9H246">
    <property type="GO annotations" value="0 GO annotations based on evolutionary models"/>
</dbReference>
<dbReference type="PhylomeDB" id="Q9H246"/>
<dbReference type="TreeFam" id="TF333178"/>
<dbReference type="PathwayCommons" id="Q9H246"/>
<dbReference type="SignaLink" id="Q9H246"/>
<dbReference type="BioGRID-ORCS" id="81563">
    <property type="hits" value="11 hits in 1128 CRISPR screens"/>
</dbReference>
<dbReference type="ChiTaRS" id="C1orf21">
    <property type="organism name" value="human"/>
</dbReference>
<dbReference type="GeneWiki" id="C1orf21"/>
<dbReference type="GeneWiki" id="C1orf21_(gene)"/>
<dbReference type="GenomeRNAi" id="81563"/>
<dbReference type="Pharos" id="Q9H246">
    <property type="development level" value="Tdark"/>
</dbReference>
<dbReference type="PRO" id="PR:Q9H246"/>
<dbReference type="Proteomes" id="UP000005640">
    <property type="component" value="Chromosome 1"/>
</dbReference>
<dbReference type="RNAct" id="Q9H246">
    <property type="molecule type" value="protein"/>
</dbReference>
<dbReference type="Bgee" id="ENSG00000116667">
    <property type="expression patterns" value="Expressed in calcaneal tendon and 193 other cell types or tissues"/>
</dbReference>
<dbReference type="ExpressionAtlas" id="Q9H246">
    <property type="expression patterns" value="baseline and differential"/>
</dbReference>
<dbReference type="InterPro" id="IPR027967">
    <property type="entry name" value="DUF4612"/>
</dbReference>
<dbReference type="PANTHER" id="PTHR14974">
    <property type="entry name" value="SIMILAR TO RIKEN CDNA 1700025G04 GENE"/>
    <property type="match status" value="1"/>
</dbReference>
<dbReference type="PANTHER" id="PTHR14974:SF3">
    <property type="entry name" value="SIMILAR TO RIKEN CDNA 1700025G04 GENE"/>
    <property type="match status" value="1"/>
</dbReference>
<dbReference type="Pfam" id="PF15389">
    <property type="entry name" value="DUF4612"/>
    <property type="match status" value="1"/>
</dbReference>